<sequence length="1368" mass="152752">MAVAEAKPQYSHAEKKRFRKSFGKQTDIMPIPNLLEIQLKSYRDFLQTDTKLSEQLNTGLHAAFSSVFPIESFSGNARLEYVGYKLGEPAFDVRECKLRGLTYSAPLRVKIRLVVLDKDASDDPKPIKDIREQDVFMGEIPLMTDVGTFVVNGTERVVVSQLHRSPGVIFEHDKGKTHSSGKLLYSARIIPYRGSWLDFEFDPKDCVYVRIDRRRKLPVTILLRALGYEAEDILSEFFETTRCHLKNGEYHIDLIPQRLRGEIASFDIHVPETGELIVEQGRRITARHIKQMEKSQMQDLVVPRDYLIGKTLAKNIIDTSTGEFLAQANDEITEELLDAMANHGILQIDMIYTNDLDHGSYISDTLKIDPTGSQLEALVEIYRMMRPGEPPTKEAAEALFKNLFFVEERYDLSAVGRMKFNRRVGIKSDEGPGTLTKEDILSVIKTLIDIRNGIGMVDDIDHLGNRRVRSVGEMTENQFRVGLVRVERAVKERLSLVESENLMPQDLINAKPVSAAIKEFFGSSQLSQFMDQVNPLSGVTHKRRVSALGPGGLTRERAGFEVRDVHTTHYGRVCPIETPEGPNIGLINSLSVYARTNEYGFIETPCRKVVNGRVTDEVEYLSAIEEVDQYIAQSNVELDAQGNILADLVPCRHQNEFSLTTPDKINYMDVSPKQIVSVAASLIPFLEHDDANRALMGSNMQRQAVPTLRSEKPLVGTGMERIVASDSGVSVVAKRGGVIDLVDASRIVVRVNDDETTAGETGVDIYNLTKYFRSNQDTCINQRPIVSTGDRIQRGDVLADGPCTDMGELALGQNLLVAFMPWNGYNFEDSILISERIVHDDRFTTIHIEELTCIARDTKLGTEEITADIPNVGESALSNLDESGVVYIGAEVKAGDILVGKVTPKGETQLTPEEKLLRAIFGEKASDVKDSSLRVPSGMNGTVIDVQVFTRDGLEKDARAKSIEEEHLARVRKDLIDERRIREEDIYHRVSHLLLDKVATGGPGSLKPGSKITQDYLDKVEREKWFDIRIEDDAVSQQLEQLSKQLELLTKEMEKRFNDSRKKIIQGDDLAPGVLKIVKVYLAVKRRIQPGDKMAGRHGNKGVISIVVPVEDMPHMEDGTAVDIVLNPLGVPSRMNIGQVLETHLGLAAKGLGRKIAQMLDERQTPEAIKAYLEKIYNHDGVQRVNLKCLNDDELMTLADNLRAGVPMATPVFDGATEQEIKSMLQLADLPADGKTVLIDGRTGNKFDNPVTVGYMYMLKLNHLVDDKMHARSTGSYSLVTQQPLGGKAQFGGQRFGEMEVWALEAYGAAYTLQEMLTVKSDDVGGRTKIYKNIVDGDHRMDPGMPESFNVLLKEIRALGIDIELEHD</sequence>
<accession>A5IHS1</accession>
<organism>
    <name type="scientific">Legionella pneumophila (strain Corby)</name>
    <dbReference type="NCBI Taxonomy" id="400673"/>
    <lineage>
        <taxon>Bacteria</taxon>
        <taxon>Pseudomonadati</taxon>
        <taxon>Pseudomonadota</taxon>
        <taxon>Gammaproteobacteria</taxon>
        <taxon>Legionellales</taxon>
        <taxon>Legionellaceae</taxon>
        <taxon>Legionella</taxon>
    </lineage>
</organism>
<keyword id="KW-0240">DNA-directed RNA polymerase</keyword>
<keyword id="KW-0548">Nucleotidyltransferase</keyword>
<keyword id="KW-0804">Transcription</keyword>
<keyword id="KW-0808">Transferase</keyword>
<gene>
    <name evidence="1" type="primary">rpoB</name>
    <name type="ordered locus">LPC_3021</name>
</gene>
<name>RPOB_LEGPC</name>
<protein>
    <recommendedName>
        <fullName evidence="1">DNA-directed RNA polymerase subunit beta</fullName>
        <shortName evidence="1">RNAP subunit beta</shortName>
        <ecNumber evidence="1">2.7.7.6</ecNumber>
    </recommendedName>
    <alternativeName>
        <fullName evidence="1">RNA polymerase subunit beta</fullName>
    </alternativeName>
    <alternativeName>
        <fullName evidence="1">Transcriptase subunit beta</fullName>
    </alternativeName>
</protein>
<evidence type="ECO:0000255" key="1">
    <source>
        <dbReference type="HAMAP-Rule" id="MF_01321"/>
    </source>
</evidence>
<proteinExistence type="inferred from homology"/>
<dbReference type="EC" id="2.7.7.6" evidence="1"/>
<dbReference type="EMBL" id="CP000675">
    <property type="protein sequence ID" value="ABQ56921.1"/>
    <property type="molecule type" value="Genomic_DNA"/>
</dbReference>
<dbReference type="RefSeq" id="WP_011945543.1">
    <property type="nucleotide sequence ID" value="NZ_JAPMSS010000006.1"/>
</dbReference>
<dbReference type="SMR" id="A5IHS1"/>
<dbReference type="KEGG" id="lpc:LPC_3021"/>
<dbReference type="HOGENOM" id="CLU_000524_4_3_6"/>
<dbReference type="GO" id="GO:0000428">
    <property type="term" value="C:DNA-directed RNA polymerase complex"/>
    <property type="evidence" value="ECO:0007669"/>
    <property type="project" value="UniProtKB-KW"/>
</dbReference>
<dbReference type="GO" id="GO:0003677">
    <property type="term" value="F:DNA binding"/>
    <property type="evidence" value="ECO:0007669"/>
    <property type="project" value="UniProtKB-UniRule"/>
</dbReference>
<dbReference type="GO" id="GO:0003899">
    <property type="term" value="F:DNA-directed RNA polymerase activity"/>
    <property type="evidence" value="ECO:0007669"/>
    <property type="project" value="UniProtKB-UniRule"/>
</dbReference>
<dbReference type="GO" id="GO:0032549">
    <property type="term" value="F:ribonucleoside binding"/>
    <property type="evidence" value="ECO:0007669"/>
    <property type="project" value="InterPro"/>
</dbReference>
<dbReference type="GO" id="GO:0006351">
    <property type="term" value="P:DNA-templated transcription"/>
    <property type="evidence" value="ECO:0007669"/>
    <property type="project" value="UniProtKB-UniRule"/>
</dbReference>
<dbReference type="CDD" id="cd00653">
    <property type="entry name" value="RNA_pol_B_RPB2"/>
    <property type="match status" value="1"/>
</dbReference>
<dbReference type="FunFam" id="2.40.50.100:FF:000006">
    <property type="entry name" value="DNA-directed RNA polymerase subunit beta"/>
    <property type="match status" value="1"/>
</dbReference>
<dbReference type="FunFam" id="2.40.50.150:FF:000001">
    <property type="entry name" value="DNA-directed RNA polymerase subunit beta"/>
    <property type="match status" value="1"/>
</dbReference>
<dbReference type="FunFam" id="3.90.1800.10:FF:000001">
    <property type="entry name" value="DNA-directed RNA polymerase subunit beta"/>
    <property type="match status" value="1"/>
</dbReference>
<dbReference type="Gene3D" id="2.40.50.100">
    <property type="match status" value="1"/>
</dbReference>
<dbReference type="Gene3D" id="2.40.50.150">
    <property type="match status" value="1"/>
</dbReference>
<dbReference type="Gene3D" id="3.90.1100.10">
    <property type="match status" value="2"/>
</dbReference>
<dbReference type="Gene3D" id="2.30.150.10">
    <property type="entry name" value="DNA-directed RNA polymerase, beta subunit, external 1 domain"/>
    <property type="match status" value="1"/>
</dbReference>
<dbReference type="Gene3D" id="2.40.270.10">
    <property type="entry name" value="DNA-directed RNA polymerase, subunit 2, domain 6"/>
    <property type="match status" value="1"/>
</dbReference>
<dbReference type="Gene3D" id="3.90.1800.10">
    <property type="entry name" value="RNA polymerase alpha subunit dimerisation domain"/>
    <property type="match status" value="1"/>
</dbReference>
<dbReference type="Gene3D" id="3.90.1110.10">
    <property type="entry name" value="RNA polymerase Rpb2, domain 2"/>
    <property type="match status" value="1"/>
</dbReference>
<dbReference type="HAMAP" id="MF_01321">
    <property type="entry name" value="RNApol_bact_RpoB"/>
    <property type="match status" value="1"/>
</dbReference>
<dbReference type="InterPro" id="IPR042107">
    <property type="entry name" value="DNA-dir_RNA_pol_bsu_ext_1_sf"/>
</dbReference>
<dbReference type="InterPro" id="IPR019462">
    <property type="entry name" value="DNA-dir_RNA_pol_bsu_external_1"/>
</dbReference>
<dbReference type="InterPro" id="IPR015712">
    <property type="entry name" value="DNA-dir_RNA_pol_su2"/>
</dbReference>
<dbReference type="InterPro" id="IPR007120">
    <property type="entry name" value="DNA-dir_RNAP_su2_dom"/>
</dbReference>
<dbReference type="InterPro" id="IPR037033">
    <property type="entry name" value="DNA-dir_RNAP_su2_hyb_sf"/>
</dbReference>
<dbReference type="InterPro" id="IPR010243">
    <property type="entry name" value="RNA_pol_bsu_bac"/>
</dbReference>
<dbReference type="InterPro" id="IPR007121">
    <property type="entry name" value="RNA_pol_bsu_CS"/>
</dbReference>
<dbReference type="InterPro" id="IPR007644">
    <property type="entry name" value="RNA_pol_bsu_protrusion"/>
</dbReference>
<dbReference type="InterPro" id="IPR007642">
    <property type="entry name" value="RNA_pol_Rpb2_2"/>
</dbReference>
<dbReference type="InterPro" id="IPR037034">
    <property type="entry name" value="RNA_pol_Rpb2_2_sf"/>
</dbReference>
<dbReference type="InterPro" id="IPR007645">
    <property type="entry name" value="RNA_pol_Rpb2_3"/>
</dbReference>
<dbReference type="InterPro" id="IPR007641">
    <property type="entry name" value="RNA_pol_Rpb2_7"/>
</dbReference>
<dbReference type="InterPro" id="IPR014724">
    <property type="entry name" value="RNA_pol_RPB2_OB-fold"/>
</dbReference>
<dbReference type="NCBIfam" id="NF001616">
    <property type="entry name" value="PRK00405.1"/>
    <property type="match status" value="1"/>
</dbReference>
<dbReference type="NCBIfam" id="TIGR02013">
    <property type="entry name" value="rpoB"/>
    <property type="match status" value="1"/>
</dbReference>
<dbReference type="PANTHER" id="PTHR20856">
    <property type="entry name" value="DNA-DIRECTED RNA POLYMERASE I SUBUNIT 2"/>
    <property type="match status" value="1"/>
</dbReference>
<dbReference type="Pfam" id="PF04563">
    <property type="entry name" value="RNA_pol_Rpb2_1"/>
    <property type="match status" value="1"/>
</dbReference>
<dbReference type="Pfam" id="PF04561">
    <property type="entry name" value="RNA_pol_Rpb2_2"/>
    <property type="match status" value="2"/>
</dbReference>
<dbReference type="Pfam" id="PF04565">
    <property type="entry name" value="RNA_pol_Rpb2_3"/>
    <property type="match status" value="1"/>
</dbReference>
<dbReference type="Pfam" id="PF10385">
    <property type="entry name" value="RNA_pol_Rpb2_45"/>
    <property type="match status" value="1"/>
</dbReference>
<dbReference type="Pfam" id="PF00562">
    <property type="entry name" value="RNA_pol_Rpb2_6"/>
    <property type="match status" value="1"/>
</dbReference>
<dbReference type="Pfam" id="PF04560">
    <property type="entry name" value="RNA_pol_Rpb2_7"/>
    <property type="match status" value="1"/>
</dbReference>
<dbReference type="SUPFAM" id="SSF64484">
    <property type="entry name" value="beta and beta-prime subunits of DNA dependent RNA-polymerase"/>
    <property type="match status" value="1"/>
</dbReference>
<dbReference type="PROSITE" id="PS01166">
    <property type="entry name" value="RNA_POL_BETA"/>
    <property type="match status" value="1"/>
</dbReference>
<feature type="chain" id="PRO_1000051971" description="DNA-directed RNA polymerase subunit beta">
    <location>
        <begin position="1"/>
        <end position="1368"/>
    </location>
</feature>
<comment type="function">
    <text evidence="1">DNA-dependent RNA polymerase catalyzes the transcription of DNA into RNA using the four ribonucleoside triphosphates as substrates.</text>
</comment>
<comment type="catalytic activity">
    <reaction evidence="1">
        <text>RNA(n) + a ribonucleoside 5'-triphosphate = RNA(n+1) + diphosphate</text>
        <dbReference type="Rhea" id="RHEA:21248"/>
        <dbReference type="Rhea" id="RHEA-COMP:14527"/>
        <dbReference type="Rhea" id="RHEA-COMP:17342"/>
        <dbReference type="ChEBI" id="CHEBI:33019"/>
        <dbReference type="ChEBI" id="CHEBI:61557"/>
        <dbReference type="ChEBI" id="CHEBI:140395"/>
        <dbReference type="EC" id="2.7.7.6"/>
    </reaction>
</comment>
<comment type="subunit">
    <text evidence="1">The RNAP catalytic core consists of 2 alpha, 1 beta, 1 beta' and 1 omega subunit. When a sigma factor is associated with the core the holoenzyme is formed, which can initiate transcription.</text>
</comment>
<comment type="similarity">
    <text evidence="1">Belongs to the RNA polymerase beta chain family.</text>
</comment>
<reference key="1">
    <citation type="submission" date="2006-11" db="EMBL/GenBank/DDBJ databases">
        <title>Identification and characterization of a new conjugation/ type IVA secretion system (trb/tra) of L. pneumophila Corby localized on a mobile genomic island.</title>
        <authorList>
            <person name="Gloeckner G."/>
            <person name="Albert-Weissenberger C."/>
            <person name="Weinmann E."/>
            <person name="Jacobi S."/>
            <person name="Schunder E."/>
            <person name="Steinert M."/>
            <person name="Buchrieser C."/>
            <person name="Hacker J."/>
            <person name="Heuner K."/>
        </authorList>
    </citation>
    <scope>NUCLEOTIDE SEQUENCE [LARGE SCALE GENOMIC DNA]</scope>
    <source>
        <strain>Corby</strain>
    </source>
</reference>